<protein>
    <recommendedName>
        <fullName evidence="1">Recombination protein RecR</fullName>
    </recommendedName>
</protein>
<feature type="chain" id="PRO_1000001638" description="Recombination protein RecR">
    <location>
        <begin position="1"/>
        <end position="201"/>
    </location>
</feature>
<feature type="domain" description="Toprim" evidence="1">
    <location>
        <begin position="81"/>
        <end position="176"/>
    </location>
</feature>
<feature type="zinc finger region" description="C4-type" evidence="1">
    <location>
        <begin position="57"/>
        <end position="72"/>
    </location>
</feature>
<sequence length="201" mass="21654">MQTSPLLESLMEALRCLPGVGPKSAQRMAFQLLQRDRSGGMRLAQALTRAMSEIGHCADCRTFTEQEHCTICLNPRRQQNGQICVVESPADIHAIEQTGQFGGRYFVLMGHLSPMDGIGPGDIGLDLLEKRLSTEAISEVILATNPTVEGDATANYIGQMCGQYGILASRIAHGVPVGGELEMVDGTTLSHSLAGRNPIKY</sequence>
<evidence type="ECO:0000255" key="1">
    <source>
        <dbReference type="HAMAP-Rule" id="MF_00017"/>
    </source>
</evidence>
<organism>
    <name type="scientific">Yersinia pestis bv. Antiqua (strain Nepal516)</name>
    <dbReference type="NCBI Taxonomy" id="377628"/>
    <lineage>
        <taxon>Bacteria</taxon>
        <taxon>Pseudomonadati</taxon>
        <taxon>Pseudomonadota</taxon>
        <taxon>Gammaproteobacteria</taxon>
        <taxon>Enterobacterales</taxon>
        <taxon>Yersiniaceae</taxon>
        <taxon>Yersinia</taxon>
    </lineage>
</organism>
<comment type="function">
    <text evidence="1">May play a role in DNA repair. It seems to be involved in an RecBC-independent recombinational process of DNA repair. It may act with RecF and RecO.</text>
</comment>
<comment type="similarity">
    <text evidence="1">Belongs to the RecR family.</text>
</comment>
<reference key="1">
    <citation type="journal article" date="2006" name="J. Bacteriol.">
        <title>Complete genome sequence of Yersinia pestis strains Antiqua and Nepal516: evidence of gene reduction in an emerging pathogen.</title>
        <authorList>
            <person name="Chain P.S.G."/>
            <person name="Hu P."/>
            <person name="Malfatti S.A."/>
            <person name="Radnedge L."/>
            <person name="Larimer F."/>
            <person name="Vergez L.M."/>
            <person name="Worsham P."/>
            <person name="Chu M.C."/>
            <person name="Andersen G.L."/>
        </authorList>
    </citation>
    <scope>NUCLEOTIDE SEQUENCE [LARGE SCALE GENOMIC DNA]</scope>
    <source>
        <strain>Nepal516</strain>
    </source>
</reference>
<reference key="2">
    <citation type="submission" date="2009-04" db="EMBL/GenBank/DDBJ databases">
        <title>Yersinia pestis Nepal516A whole genome shotgun sequencing project.</title>
        <authorList>
            <person name="Plunkett G. III"/>
            <person name="Anderson B.D."/>
            <person name="Baumler D.J."/>
            <person name="Burland V."/>
            <person name="Cabot E.L."/>
            <person name="Glasner J.D."/>
            <person name="Mau B."/>
            <person name="Neeno-Eckwall E."/>
            <person name="Perna N.T."/>
            <person name="Munk A.C."/>
            <person name="Tapia R."/>
            <person name="Green L.D."/>
            <person name="Rogers Y.C."/>
            <person name="Detter J.C."/>
            <person name="Bruce D.C."/>
            <person name="Brettin T.S."/>
        </authorList>
    </citation>
    <scope>NUCLEOTIDE SEQUENCE [LARGE SCALE GENOMIC DNA]</scope>
    <source>
        <strain>Nepal516</strain>
    </source>
</reference>
<gene>
    <name evidence="1" type="primary">recR</name>
    <name type="ordered locus">YPN_0968</name>
    <name type="ORF">YP516_1050</name>
</gene>
<proteinExistence type="inferred from homology"/>
<accession>Q1CL30</accession>
<accession>C4GQP7</accession>
<name>RECR_YERPN</name>
<dbReference type="EMBL" id="CP000305">
    <property type="protein sequence ID" value="ABG17300.1"/>
    <property type="molecule type" value="Genomic_DNA"/>
</dbReference>
<dbReference type="EMBL" id="ACNQ01000008">
    <property type="protein sequence ID" value="EEO77388.1"/>
    <property type="molecule type" value="Genomic_DNA"/>
</dbReference>
<dbReference type="RefSeq" id="WP_002208603.1">
    <property type="nucleotide sequence ID" value="NZ_ACNQ01000008.1"/>
</dbReference>
<dbReference type="SMR" id="Q1CL30"/>
<dbReference type="GeneID" id="57975591"/>
<dbReference type="KEGG" id="ypn:YPN_0968"/>
<dbReference type="HOGENOM" id="CLU_060739_1_2_6"/>
<dbReference type="Proteomes" id="UP000008936">
    <property type="component" value="Chromosome"/>
</dbReference>
<dbReference type="GO" id="GO:0003677">
    <property type="term" value="F:DNA binding"/>
    <property type="evidence" value="ECO:0007669"/>
    <property type="project" value="UniProtKB-UniRule"/>
</dbReference>
<dbReference type="GO" id="GO:0008270">
    <property type="term" value="F:zinc ion binding"/>
    <property type="evidence" value="ECO:0007669"/>
    <property type="project" value="UniProtKB-KW"/>
</dbReference>
<dbReference type="GO" id="GO:0006310">
    <property type="term" value="P:DNA recombination"/>
    <property type="evidence" value="ECO:0007669"/>
    <property type="project" value="UniProtKB-UniRule"/>
</dbReference>
<dbReference type="GO" id="GO:0006281">
    <property type="term" value="P:DNA repair"/>
    <property type="evidence" value="ECO:0007669"/>
    <property type="project" value="UniProtKB-UniRule"/>
</dbReference>
<dbReference type="CDD" id="cd01025">
    <property type="entry name" value="TOPRIM_recR"/>
    <property type="match status" value="1"/>
</dbReference>
<dbReference type="FunFam" id="1.10.8.420:FF:000001">
    <property type="entry name" value="Recombination protein RecR"/>
    <property type="match status" value="1"/>
</dbReference>
<dbReference type="FunFam" id="3.40.1360.10:FF:000001">
    <property type="entry name" value="Recombination protein RecR"/>
    <property type="match status" value="1"/>
</dbReference>
<dbReference type="Gene3D" id="3.40.1360.10">
    <property type="match status" value="1"/>
</dbReference>
<dbReference type="Gene3D" id="6.10.250.240">
    <property type="match status" value="1"/>
</dbReference>
<dbReference type="Gene3D" id="1.10.8.420">
    <property type="entry name" value="RecR Domain 1"/>
    <property type="match status" value="1"/>
</dbReference>
<dbReference type="HAMAP" id="MF_00017">
    <property type="entry name" value="RecR"/>
    <property type="match status" value="1"/>
</dbReference>
<dbReference type="InterPro" id="IPR000093">
    <property type="entry name" value="DNA_Rcmb_RecR"/>
</dbReference>
<dbReference type="InterPro" id="IPR023627">
    <property type="entry name" value="Rcmb_RecR"/>
</dbReference>
<dbReference type="InterPro" id="IPR015967">
    <property type="entry name" value="Rcmb_RecR_Znf"/>
</dbReference>
<dbReference type="InterPro" id="IPR006171">
    <property type="entry name" value="TOPRIM_dom"/>
</dbReference>
<dbReference type="InterPro" id="IPR034137">
    <property type="entry name" value="TOPRIM_RecR"/>
</dbReference>
<dbReference type="NCBIfam" id="TIGR00615">
    <property type="entry name" value="recR"/>
    <property type="match status" value="1"/>
</dbReference>
<dbReference type="PANTHER" id="PTHR30446">
    <property type="entry name" value="RECOMBINATION PROTEIN RECR"/>
    <property type="match status" value="1"/>
</dbReference>
<dbReference type="PANTHER" id="PTHR30446:SF0">
    <property type="entry name" value="RECOMBINATION PROTEIN RECR"/>
    <property type="match status" value="1"/>
</dbReference>
<dbReference type="Pfam" id="PF21175">
    <property type="entry name" value="RecR_C"/>
    <property type="match status" value="1"/>
</dbReference>
<dbReference type="Pfam" id="PF21176">
    <property type="entry name" value="RecR_HhH"/>
    <property type="match status" value="1"/>
</dbReference>
<dbReference type="Pfam" id="PF02132">
    <property type="entry name" value="RecR_ZnF"/>
    <property type="match status" value="1"/>
</dbReference>
<dbReference type="Pfam" id="PF13662">
    <property type="entry name" value="Toprim_4"/>
    <property type="match status" value="1"/>
</dbReference>
<dbReference type="SMART" id="SM00493">
    <property type="entry name" value="TOPRIM"/>
    <property type="match status" value="1"/>
</dbReference>
<dbReference type="SUPFAM" id="SSF111304">
    <property type="entry name" value="Recombination protein RecR"/>
    <property type="match status" value="1"/>
</dbReference>
<dbReference type="PROSITE" id="PS01300">
    <property type="entry name" value="RECR"/>
    <property type="match status" value="1"/>
</dbReference>
<dbReference type="PROSITE" id="PS50880">
    <property type="entry name" value="TOPRIM"/>
    <property type="match status" value="1"/>
</dbReference>
<keyword id="KW-0227">DNA damage</keyword>
<keyword id="KW-0233">DNA recombination</keyword>
<keyword id="KW-0234">DNA repair</keyword>
<keyword id="KW-0479">Metal-binding</keyword>
<keyword id="KW-0862">Zinc</keyword>
<keyword id="KW-0863">Zinc-finger</keyword>